<reference key="1">
    <citation type="journal article" date="2013" name="BMC Genomics">
        <title>Genomics-driven discovery of the pneumocandin biosynthetic gene cluster in the fungus Glarea lozoyensis.</title>
        <authorList>
            <person name="Chen L."/>
            <person name="Yue Q."/>
            <person name="Zhang X."/>
            <person name="Xiang M."/>
            <person name="Wang C."/>
            <person name="Li S."/>
            <person name="Che Y."/>
            <person name="Ortiz-Lopez F.J."/>
            <person name="Bills G.F."/>
            <person name="Liu X."/>
            <person name="An Z."/>
        </authorList>
    </citation>
    <scope>NUCLEOTIDE SEQUENCE [LARGE SCALE GENOMIC DNA]</scope>
    <scope>IDENTIFICATION</scope>
    <scope>FUNCTION</scope>
    <scope>DISRUPTION PHENOTYPE</scope>
    <scope>PATHWAY</scope>
    <source>
        <strain>ATCC 20868 / MF5171</strain>
    </source>
</reference>
<reference key="2">
    <citation type="journal article" date="2014" name="ChemBioChem">
        <title>Pneumocandin biosynthesis: involvement of a trans-selective proline hydroxylase.</title>
        <authorList>
            <person name="Houwaart S."/>
            <person name="Youssar L."/>
            <person name="Huettel W."/>
        </authorList>
    </citation>
    <scope>FUNCTION</scope>
</reference>
<reference key="3">
    <citation type="journal article" date="2015" name="ACS Chem. Biol.">
        <title>Genetic manipulation of the pneumocandin biosynthetic pathway for generation of analogues and evaluation of their antifungal activity.</title>
        <authorList>
            <person name="Li Y."/>
            <person name="Chen L."/>
            <person name="Yue Q."/>
            <person name="Liu X."/>
            <person name="An Z."/>
            <person name="Bills G.F."/>
        </authorList>
    </citation>
    <scope>FUNCTION</scope>
    <scope>DOMAIN</scope>
    <scope>PATHWAY</scope>
    <scope>BIOTECHNOLOGY</scope>
</reference>
<reference key="4">
    <citation type="journal article" date="2015" name="Appl. Environ. Microbiol.">
        <title>Engineering of Glarea lozoyensis for exclusive production of the pneumocandin B0 precursor of the antifungal drug caspofungin acetate.</title>
        <authorList>
            <person name="Chen L."/>
            <person name="Yue Q."/>
            <person name="Li Y."/>
            <person name="Niu X."/>
            <person name="Xiang M."/>
            <person name="Wang W."/>
            <person name="Bills G.F."/>
            <person name="Liu X."/>
            <person name="An Z."/>
        </authorList>
    </citation>
    <scope>FUNCTION</scope>
    <scope>BIOTECHNOLOGY</scope>
</reference>
<reference key="5">
    <citation type="journal article" date="2016" name="ACS Chem. Biol.">
        <title>Engineering of new pneumocandin side-chain analogues from Glarea lozoyensis by mutasynthesis and evaluation of their antifungal activity.</title>
        <authorList>
            <person name="Chen L."/>
            <person name="Li Y."/>
            <person name="Yue Q."/>
            <person name="Loksztejn A."/>
            <person name="Yokoyama K."/>
            <person name="Felix E.A."/>
            <person name="Liu X."/>
            <person name="Zhang N."/>
            <person name="An Z."/>
            <person name="Bills G.F."/>
        </authorList>
    </citation>
    <scope>FUNCTION</scope>
    <scope>BIOTECHNOLOGY</scope>
</reference>
<reference key="6">
    <citation type="journal article" date="2018" name="Appl. Environ. Microbiol.">
        <title>Cryptic production of trans-3-hydroxyproline in echinocandin B biosynthesis.</title>
        <authorList>
            <person name="Mattay J."/>
            <person name="Houwaart S."/>
            <person name="Huettel W."/>
        </authorList>
    </citation>
    <scope>FUNCTION</scope>
</reference>
<reference key="7">
    <citation type="journal article" date="2017" name="Z. Naturforsch. C">
        <title>Structural diversity in echinocandin biosynthesis: the impact of oxidation steps and approaches toward an evolutionary explanation.</title>
        <authorList>
            <person name="Huettel W."/>
        </authorList>
    </citation>
    <scope>REVIEW</scope>
    <scope>DOMAIN</scope>
</reference>
<name>GLOA_GLAL2</name>
<comment type="function">
    <text evidence="5 6 7 8 9 10 13">Nonribosomal peptide synthetase; part of the gene cluster that mediates the biosynthesis of pneumocandins, lipohexapeptides of the echinocandin family that prevent fungal cell wall formation by non-competitive inhibition of beta-1,3-glucan synthase (PubMed:23688303, PubMed:25879325, PubMed:27705900). The 10,12-dimethylmyristoyl side chain is synthesized by the reducing polyketide synthase gloL/GLPKS4 (PubMed:27494047). The thioesterase gloN/GLHYD exclusively interacts with gloL/GLPKS4 to maintain turnover of the polyketide side chain (PubMed:27494047). The 10R,12S-dimethylmyristic acid is then transferred to the first thiolation domain of the nonribosomal peptide synthetase gloA/GLNRPS4 by the acyl-AMP ligase gloD/GLligase, followed by its acylation to L-ornithine to trigger elongation of the cyclic hexapeptide (PubMed:27494047). L-ornithine, 4R-hydroxyl-L-proline (generated from L-proline by the dioxygenase gloF/GLOXY2), 3S-hydroxyl-L-homotyrosine (generated by gloG/GLHtyB, gloH/GLHtyA, gloI/GLHtyC, gloJ/GLHtyD and hydroxylated at C-3 by the dioxygenase gloM/GLOXY1), 3R-hydroxyl-L-glutamine (generated from L-glutamine probably by the dioxygenase gloE/GLOXY3) and 3S-hydroxyl-L-proline (generated from L-proline by the dioxygenase gloF/GLOXY2 to yield pneumocandin B0), or 3S-hydroxyl-4S-methyl-L-proline (generated from L-leucine by the dioxygenase gloC/GLOXY4 to yield pneumocandin A0) are sequentially added to the growing chain (PubMed:25270390, PubMed:25527531, PubMed:25879325). The last C domain of gloA/GLNRPS4 is proposed to be responsible for cyclization by condensation to form the peptide bond between L-ornithine and 3S-hydroxyl-4S-methyl-L-proline (for pneumocandin A0) or 3S-hydroxyl-L-proline (for pneumocandin B0). Finally, the subsequent C-4 hydroxylation of 3S-hydroxyl-L-homotyrosine and L-ornithine dihydroxylation at C-4 and C-5 are performed by the cytochrome P450 monooxygenases gloP/GLP450-1 and gloO/GLP450-2, respectively (PubMed:25879325).</text>
</comment>
<comment type="pathway">
    <text evidence="5 16">Mycotoxin biosynthesis.</text>
</comment>
<comment type="domain">
    <text evidence="1 16 17">NRP synthetases are composed of discrete domains (adenylation (A), thiolation (T) or peptidyl carrier protein (PCP) and condensation (C) domains) which when grouped together are referred to as a single module (By similarity). Each module is responsible for the recognition (via the A domain) and incorporation of a single amino acid into the growing peptide product (By similarity). Thus, an NRP synthetase is generally composed of one or more modules and can terminate in a thioesterase domain (TE) that releases the newly synthesized peptide from the enzyme (By similarity). Occasionally, epimerase (E) domains (responsible for L- to D-amino acid conversion) are present within the NRP synthetase (By similarity). GloA has the following architecture: T-C-A-T-C-A-T-C-A-T-C-A-T-C-A-T-C-A-T-C (PubMed:25879325, PubMed:27705900).</text>
</comment>
<comment type="disruption phenotype">
    <text evidence="5">Blocks the production of the two major pneumocandins, A0 and B0 (PubMed:23688303).</text>
</comment>
<comment type="biotechnology">
    <text evidence="7 8 9">Pneumocandin B0 is the starting molecule for the first semisynthetic echinocandin antifungal drug, caspofungin acetate (PubMed:25527531). Pneumocandin B0 is a minor fermentation product, and its industrial production was achieved by a combination of extensive mutation and medium optimization (PubMed:25527531). Inactivation of three of gloP/GLP450-1, gloO/GLP450-2, and gloM/GLOXY1 generates 13 different pneumocandin analogs that lack one, two, three, or four hydroxyl groups on 4R,5R-dihydroxy-ornithine and 3S,4S-dihydroxy-homotyrosine of the parent hexapeptide (PubMed:25879325). All of these cyclic lipopeptides show potent antifungal activities, and two new metabolites pneumocandins F and G are more potent in vitro against Candida species and Aspergillus fumigatus than the principal fermentation products, pneumocandins A0 and B0 (PubMed:25879325). Moreover, feeding alternative side chain precursors yields acrophiarin and 4 additional pneumocandin congeners with straight C14, C15, and C16 side chains. One of those compounds, pneumocandin I, has elevated antifungal activity and similar hemolytic activity compared to pneumocandin B0, the starting molecule for caspofungin, demonstrating the potential for using gloD/GLligase for future engineering of new echinocandin analogs (PubMed:27494047).</text>
</comment>
<comment type="similarity">
    <text evidence="14">Belongs to the NRP synthetase family.</text>
</comment>
<organism>
    <name type="scientific">Glarea lozoyensis (strain ATCC 20868 / MF5171)</name>
    <dbReference type="NCBI Taxonomy" id="1116229"/>
    <lineage>
        <taxon>Eukaryota</taxon>
        <taxon>Fungi</taxon>
        <taxon>Dikarya</taxon>
        <taxon>Ascomycota</taxon>
        <taxon>Pezizomycotina</taxon>
        <taxon>Leotiomycetes</taxon>
        <taxon>Helotiales</taxon>
        <taxon>Helotiaceae</taxon>
        <taxon>Glarea</taxon>
    </lineage>
</organism>
<accession>S3DQP3</accession>
<evidence type="ECO:0000250" key="1">
    <source>
        <dbReference type="UniProtKB" id="Q4WAZ9"/>
    </source>
</evidence>
<evidence type="ECO:0000255" key="2"/>
<evidence type="ECO:0000255" key="3">
    <source>
        <dbReference type="PROSITE-ProRule" id="PRU00258"/>
    </source>
</evidence>
<evidence type="ECO:0000256" key="4">
    <source>
        <dbReference type="SAM" id="MobiDB-lite"/>
    </source>
</evidence>
<evidence type="ECO:0000269" key="5">
    <source>
    </source>
</evidence>
<evidence type="ECO:0000269" key="6">
    <source>
    </source>
</evidence>
<evidence type="ECO:0000269" key="7">
    <source>
    </source>
</evidence>
<evidence type="ECO:0000269" key="8">
    <source>
    </source>
</evidence>
<evidence type="ECO:0000269" key="9">
    <source>
    </source>
</evidence>
<evidence type="ECO:0000269" key="10">
    <source>
    </source>
</evidence>
<evidence type="ECO:0000303" key="11">
    <source>
    </source>
</evidence>
<evidence type="ECO:0000303" key="12">
    <source>
    </source>
</evidence>
<evidence type="ECO:0000303" key="13">
    <source>
    </source>
</evidence>
<evidence type="ECO:0000305" key="14"/>
<evidence type="ECO:0000305" key="15">
    <source>
    </source>
</evidence>
<evidence type="ECO:0000305" key="16">
    <source>
    </source>
</evidence>
<evidence type="ECO:0000305" key="17">
    <source>
    </source>
</evidence>
<sequence>MTPSRSLENGEKQMNWNESPQTASPKNVLRDSNSNGNYVNGHGTNINGDGSDGVGNGINANGSATKINGNGTYTNGNGAHTNGNGVHTNGHGISLESQTSDSKVHSTSKFKEEFRAICAKVLKIDIEELDDTCSFVSLGGDSISAIKLVTECEVRGIELKTVDVISTHTISGLFATANFRPFGKHSNGKTGISYSRNQEDDDPSPFALWTAHRDSDLIEKRQRLEEIAVLCGVETEEIEDVYPCTPLQEGLIAITTRQPTAYVQRRVCRLTNEIDLERFWAAWETLVANVASLRTRIIMGPGGQSLQVVIREKLLWRRGSNLGRYLSRDRADGMMLGQPLARFGRIQEETGSFFVWTAHHSIFDGWSALLLYRQLLAIYQQSYVPRLVPFSRFLRYLAEQDSTAATRYWHSQLHGDTMADWPALPSSNYQPQPQHVFRSSINLPHGYKPGTIMISNLLRAAWALVMAQYSGNDDVIFAVTVSGRSAPVSQIADIIAPTITTVPVRIRIDRSMSIAELLLEIQSQAAKMIEHEHTGLQTIKKLLPEFGTALELRNLLIVQPEAESDDYVYKEFPGLEAIREAMEDFDNYGLNVECILGSQSIEVLVNYDDHVINTMHLRDVMGQFTYTVQCLCNPSVSKLSVNDVATIKTSDQQRILEWNEHIPPSVDRCIHHLVQDQVNIQPAKLAVDAWDGKYTYADLARESISLAHHLVGLGLGPEQPVGLCGSVLPLGVSHPFARTSGIVQEAKVRIVLVDESQRTELAKLATTLIVVDSELIAALPSEAKPPETGVTPENVAWILFTSGSTGTPKGVVLQHASLCTSLIGHANTVGINKYTRTFQFAAFTFDVSLCDIFSTLQAGGCVCMPSEDERMNSLAEAASRMEVNYAELTSTVTETISPSQVPSLATLALSGEALKPSVLSTWARHSSVFNSYGPTECSIVASNSKRLSNVEEAQNIGGPMSSIFWVVQAANFHQLCPIGAPGELLIEGPLLARGYLNDEVKTEKAFIIDPDFTKQLGLSPGRRMYRTGDLVRQNQDGSLMYLGRCDSTQVKVRGQRVEVSEIEYQISRQLPEIQTVAVEMLQRGTQASLVAVVNFAMDSKYAAPAAFDTTTTKTETIFSTDALRAVFQDLQLALSQVLPAYMIPTLYAPMSTIPMNASGKLDRRVLRTKLDSMSFDELRVYMADDGPKAAPSTDAEKQVQSLWSEVLAINPQDIALSDNFFRIGGDSIAAMRMVALKASRRLRLTVADVFQHPQLSDLAFVIQRRLQMVEDGVQEEDSAPFDLWAKFKVDGLDSTKRAQELAIIATRCDIRVDDIEDIYPCTPLQEGLIAITTHQPTAYVSRQIYKLAPTLDVVRFQKAWQTLAQVTPILRTRILAGLDTSDVSLQVVVRGSITWQYGADSGTLSDYVAQDRKSGMRLGQPLVRFGLVRNSSEQFFIWTAHHSVYDGWSVSLMYQHLYDIYFDQRIPSTIPYARFIRYLIRHDDAASEKYWRSQLQGEVVSNWPPLPRADYQPRPQQRYTCDIILPDHTMNDRVNSLLPSVLRAAWGVTMSKYTGQGDVVFGVTLLGRNAPVSQITEMTGPTITTVPVRIHLDGPQPLTINQFLQNVQKQAADMINYEHAGLQVIKKLVPELNSSLELRNLLVIQPASETDGTAFPGLDPLPVDLEGFDSYGLTIECSILSGLVKVEARYDENVIATPQLKRTIRTFEHVVKQLLDVRNSVYRLEEMSWLSDYDEEAIANWSKATPIRVERCIHELVQEQTKLRPNATAICAWDGNLTYAELDMQATWLARYLTSLGACSQRMVGICMDKSKWAGVSMLAVLKAGAVLVPLGVNHPEARIKAMVDDTDTQIILVDEKQRDRLSIQGVRLITVDADILKKLPVLAEKEELLGSVNPDDAAWVIYTSGSTGKPKGVVLQHVALCSSIQAHGARFGMGTSTRMLQFAAHTFDACIQDYFTTLSWGGVVCVPSENDRMSDLTTAMCQMKVTFATLTSTVARLIDPHKVPSMQKLALVGEPVKADVVKQWLGHTIVLNAYGPSECSIHSSCGEPLADSTKSAVIGTGMGTRLWVVDVDYNQLCPIGAPGELLIEGPLLAREYLNDPRKTKAAFVSDPRFAQKFGLAPGTRMYRTGDLVKQNEDSSITHLGRRDTQIKIRGQRVEVGEIEFQIAQHPQVRTVAVELLEQDSNGSQVILTAVIEFTEDSEYRNGPVTSSGLLTLTPSLSLAFEMLRGALFQVLPSYMLPSMYVPIVDMPMNVNGKLDRRAVRDLLQAMTPDVRQQYLSASDHKVAPSTREECLVHSLWTEALSLSFSQVGIYDNFFQIGGDSVVAMRMVATESARELQLTVADLFQHPRLIELAELLAKRSVDKKVEADPEPFSLWLEPQIGSEQQQEKLTMVAKQCGISVNHVEDVYPCTPLQVGLMAITARQPLAYIDRQVYKLADTIDLDRFQAAWRALSDATPILRTRIITSEGPQSFLQVVVGGCDPWRDSNDLEDYMASDRDVGIALGKPLVRMGLVRERNSEERYFVWTAHHSVYDGTSALLMYQQLASIYFHGSLLPTAPFTRFIRYLARKEVIAAESAAYWADQLQGEVMANWPPLPRIDYQPKPQHEMTQIFRLPQFESRSVVTISNVIRAAWALVMAQRTGHSDVVFAVTVSGRNAPISQVDSIIAPTISTVPVRVQIDWTQDVAGFLFAIQNQAAQMIDYEHTGLRAIKALVPELGPTLDIRNVLVVQTAEERGAADHFPGIEALPQGKENFDSYGLLTECTLGTDGEVRIDFRYDDNVIPSSSIKRISAQFAHLVQQLCGNATSTLHRLNELVLIAPEDQEQIMKWNPMLPPRVDSCIHELFYKQVMARPQAEAVSGWDGELSYSDLADESIRLAYQLISLGIGPEMKVGLCIDKSKWAIIAIMSILFAGGVVVPLGVTHPLPRLDVVIEDASIDLILVDQHQRKRLAALSQNVKLITVNDALLRTLPVHTEPPVTGVVSRNAAWIIYTSGSTGTPKGVVLEHGGCCTSMRTQGKKMNLSAETRALQFTPFTFDVSISDVSATLIYGGCICVISESDRVNNLPGAIREMKVNFASLTPTVAQMLSPAELPSLKTLALTGEAVKPEVVELWMNSVALYDTYGPSEGSVCTCNGPLSSPDQADNIGFPMSTLHWVTQLHNHNQLCPIGAPGELLIEGPLLARGYLNQARTKESFVNDPAFTKQQTGLPSARHIYRTGDLVRQNEDGSFIYLGRRDDQIKIRGQRVEVGEIEYQIVCELPGTHSAAVAMLQDGKNISLIAIVDFKSDSEHYPGELESLGTLAPTPQLRAAFNELRQSLTKLLPSYMVPAIFVPVVQMPTNISGKLDRLGVRALLRAIPSDHLARYMIDETLPSETPSTKMEKVIQSLWAEALDIPMDNISAHDNFFQIGGDSVTAMRIVAATTRTNQLQLTVSDIFQNPKLSDLASVMTEHRKNHFDVMDEDPEPFSLWEAVISDNSNEQKRQIEAIAQQCNVSVDDIEDIYPCTALQEGLLAVTARQTSAYVSRQAYVLSDQIDISRFKEAWRKLVAGIHILRTRAVVGPDSLLQVVVRDEITWRHGSNLEDYIQQDKEEGIRLGQPLSRYGLVQLPSGEQVFVWTAHHSIYDGWTIRLMCRQLISLYRQEEDISTSIPYSRFIQYLTQINIEDSIEYWREQLRGESVTANWPSLPQPNYEPRPRHLLRKHISLPRTENQGIVMSNILRAAWGLVMIQYSGENDVVYAANLSGRNVPVRDVAEICAPTITTVPIRLRLDHTSTQTVGDFLQNIQQQAIEMINHEHTGLQVIKSLAPELSDSVLKLRNLLVIQPAAESDTHLDFPGIELVPSDIADFDAYGVNIECTLGQEIAVEARYDENVVETPYMNGVLDQFVYIVGLLCDPSISRWNATVPERVTKCIHELVQEQALARPTALAVQAWDGKLTYGELDNLANRLAHQLVSFGIGSLPDQMVGVCMEKSLFAVVAMLAVLKAGGVVVPLGVTHPITRLDTIIHDTGITVLLVDASQDERLAELSPTRILVNSDHLYHYLPARTQPPKTPVNHMDAAWVIYTSGTTGTPKGAVSEHGTLSTSIKAHGARYGFGHHTRKLNYAAHTFDGTIEDFFTTLSWGGVCCIPSEEDRMDKYKLMEFMNLTKVNSAAMTYTVASLLSPRDLPTLHTLVLGGEPATIDVVSTWMTEVNLFNCYGPSECSIFSAAAGPTKNTNELHNIGFPIGTRLWVADIENYHKLAPIGAPGELLIEGPQLARGYLNDESKTSAAFIVDPAFTTHFKLPLGTRMYRSGDIVRQKNDGSLVYVARRDMQVKIRGQRVEIGEIESQISQHISEARTIAVELLKLGTQSQPVLVAAVEFADGSQYHTGDVTSFGMLAPTEAIREAFIKLRGTLFQVLPGYMVPSAYLTIAEMPRNISGKLDRKTLRTMLEAIPADAIQQYLDGEAKTLPSTQVELQLQALWAEALGISVDGVGAHDNFFQLGGDSVAAMRIVAMSQAREMGLSVADIFAYPRLSELAVILDGRKNSNEVFYSDPEPFALWPRATNKVLDENTLLADIASKCNVTVNQIEDIYPCTPLQEGMIAITARQSAAYVSRQIYALDTTVIELGKFQRAWQVLANATPILRTRLVITQNGQSMQVVLRDTIAWRHSTDLDAYVNEDRAEGISLGQPLLRYSLVKQITGECFFVWTAHHSIYDGWTMRSICQRLVEMYNNIDNSSYQMPQSVPYSRFIHYLTQSDKSAAATFWRQQLHGDIMADWPSLPSIDYQPKPQHRDRKTIRVAGSTSKNILTSNILRAAWALLMSQYTGHPDVVFAASVSGRNAPVWQIGEIAGPTLTTVPVRVQAKPGMTVRQFIQEVQEQSTAMIRFEHTGLQNIKALVPEAAMALELRNVLVVQIAEESDHRIDFPGLEALPMPFEDFDSFGIHLECTPGLDDIEVEARYDVNIVSAPHMKRVLNQFEYVVQKFHDSEYSDFSLQSIQLNPHDERQILEWNATVPSHTERCVHNLVDDHVAARPMAPAICGWDGDLTYRELSRIATSLAFHLQHELGVGPEQKVGVCMDKSKWAVVAMLAVMYAGGVVVPLGVAHPLTRIRGILIDSASSVVLVDATQRERLVDLHTSLICVDAKLIARLSSQNQKQNQTQKLQVEVTPGNLAWVVYTSGSTGKPKGVMLEHRALSTALQAHGSAFGMDTNTRTIQFAAHTFDAAIQDIFTTFSKGGCVCIPSEHDRVNNLTKAMASMNVNFANFTSTVASMLVPEELPSLKTMILAGEAVTPTAVGLWSQHVTIFNSYGPSECSINSSCSKPVKEVSQASNVGLPLSCCFWVTNTTDYNSLCPIGAPGELLIEGPIQARGYLNDKEQTNKSFVTDPGFTKKLGLSGRRMYRTGDLVRQNADGTLTYLGRQDLQVKIRGQRVEIGEIEYQIKKKLLGARTVAVEKIEQGGHSEQTRLVTMMDFKDTSEHSHNPDILASGALSPTPKLQTAFEKLRQSLSEVLPSYMVPTFYVPVAQMPVNASNKLDRRAVKAVLASLTPDALQQYLPGGTDTKQAPDTDLGRLIQGLWADALGISTDTISMTDNIFHLGGDSVTAMRIVAAAYSHELQLTVTDIFQHPQLADLVNTLSNRSLERNTEIQEDPMAFELWEEAASCSTEERKRLLTEVAAQCGVAVSHIEDVYPSTPLQEGLMAITARQPAAYVSRQVYTLAKTVDQLKFKMAWQALSSEAHILRTRLLVAPHGLQVVVNDRIDWHHGTDLENYLQADRRAGMSPGKPLVRYGLIKQPSGETFFVWTSHHSLYDGWTLRSLGKRLLDLYNDGSPQSFVPFSRFIRYLQFGRPGNDDTATYWRNELEGDIVTDWPSLPRSDYQPLPRDNFSRAITLPDSHHSGSVVMSNVIRAAWALVMSQYAGHNDVAFAATVSGRNAPVWQIEDIPAPTITTVPLRISVDPMQTVAEFLDTVQQQAVRMIDYEHTGLQGIKALAPDLGPAIDLRNLLVVQPAADSDSNVQLDFPGLGSVSMPIEPFNSYGLTVECKLASHEIVVDVHYDKDVISSAQLKRVIDFFACVVQRILTQSPRSYRIQEIVAIGEEDLQQVLAWNSTIPPNVDKCIHEMVQAQVKKSPAALAISAWDGDLTYEEFFKSSARLAHHLVALGVNTGSNIGICMDKSKWGPVSMLSIMQAGAAIMPLGTSHPLARIETIVRNSEASVIIVDEKQRQRLDQLYTETSLTLVTVDSKFFKQLPAQTKAPSTGVRPSDASWLIHTSGSTGVPKGVIIDHVTMSTSLRAQGSWLGLNQKSRFLQFSNYTFDNVITDTFATTVFGGCVCVPSEDARMNNLPGFMATANVNVAMLTSTVARQISPSQVPSLHTLILTGEPVRADVVSTWLGHADIYNAYGPTEGSMSTCTKPMMRSDQVSNIGYPLATRAWITQPDHIQLSPIGAPGELFIEGPLLARGYLNNPEMTRDSFIINPEFTKRLGLENRRVYRTGDLVRQNEDGSLIYLGRRDLQVKIRGQRVEVGEIELQIIKHTPGAELVAVELIQQKDTKEEKRNLIAAIEFAKDSEHCHGSQNTPGPQILAPTDALRDDFARLRGLLYQVLPSYMIPSAFIPTTNLDRNLSGKLDRKGLRGLLEALSSQQLRQYSASGGSKVNPSTTMERQLQTLWAEALGIPADQVGAHDNFFQIGGDSMVAMRVVAASHSKDLNLRVNDIFQHSCLSDLAVVLTDRLAHNFNGGQDGHAPFSLIKTDDIDDFLQQIASSVVGCAIQDIVDILPTTDFQSSIIDTALAAPKSGTSHFLLDGNGPCDTRALKKSCLELIQATDTLRTGYVFDQGNLLQVIQAYFEPEIKIYETDSTIEAVTEDIVSRDMYQPIGLGRPFTQIAIIRETATLKHRVLLRLTHAEYDAHSMGSIWQNLRSLYEGGSTRPQAKFSDFLYNQRQSINADTYDYWRDLLKGSSMPAINLSAKKIGQYPSKVNQDLFRTIETPDLMVEGRTSAMLVKSAWSLVLSQFLRVNDVVFADTVSTRTTVDSSLMDAMGCCVTLIPFRVTLEQQWTIKDLLDNVRDQQSQSMQHSQLGFREILRECTDWPASTRFTSALNHISSGPESSIFSMRGVEYSISEMEIKDPLWEIDVGITTIQRGSELEIRLSYLPANISESVATSLLDALHNTLQFIHNNPLSPVKQVLSFHTDMKIQNGSSN</sequence>
<proteinExistence type="evidence at protein level"/>
<protein>
    <recommendedName>
        <fullName evidence="12">Nonribosomal peptide synthetase gloA</fullName>
        <ecNumber evidence="15">6.3.2.-</ecNumber>
    </recommendedName>
    <alternativeName>
        <fullName evidence="12">Pneumocandin biosynthesis cluster protein A</fullName>
    </alternativeName>
</protein>
<keyword id="KW-0436">Ligase</keyword>
<keyword id="KW-0596">Phosphopantetheine</keyword>
<keyword id="KW-0597">Phosphoprotein</keyword>
<keyword id="KW-1185">Reference proteome</keyword>
<keyword id="KW-0677">Repeat</keyword>
<dbReference type="EC" id="6.3.2.-" evidence="15"/>
<dbReference type="EMBL" id="KE145356">
    <property type="protein sequence ID" value="EPE34341.1"/>
    <property type="molecule type" value="Genomic_DNA"/>
</dbReference>
<dbReference type="RefSeq" id="XP_008078276.1">
    <property type="nucleotide sequence ID" value="XM_008080085.1"/>
</dbReference>
<dbReference type="SMR" id="S3DQP3"/>
<dbReference type="STRING" id="1116229.S3DQP3"/>
<dbReference type="GeneID" id="19469082"/>
<dbReference type="KEGG" id="glz:GLAREA_10035"/>
<dbReference type="eggNOG" id="KOG1176">
    <property type="taxonomic scope" value="Eukaryota"/>
</dbReference>
<dbReference type="eggNOG" id="KOG1178">
    <property type="taxonomic scope" value="Eukaryota"/>
</dbReference>
<dbReference type="HOGENOM" id="CLU_000022_60_0_1"/>
<dbReference type="OMA" id="CTGVQKS"/>
<dbReference type="OrthoDB" id="416786at2759"/>
<dbReference type="Proteomes" id="UP000016922">
    <property type="component" value="Unassembled WGS sequence"/>
</dbReference>
<dbReference type="GO" id="GO:0005737">
    <property type="term" value="C:cytoplasm"/>
    <property type="evidence" value="ECO:0007669"/>
    <property type="project" value="TreeGrafter"/>
</dbReference>
<dbReference type="GO" id="GO:0016874">
    <property type="term" value="F:ligase activity"/>
    <property type="evidence" value="ECO:0007669"/>
    <property type="project" value="UniProtKB-KW"/>
</dbReference>
<dbReference type="GO" id="GO:0031177">
    <property type="term" value="F:phosphopantetheine binding"/>
    <property type="evidence" value="ECO:0007669"/>
    <property type="project" value="InterPro"/>
</dbReference>
<dbReference type="GO" id="GO:0043041">
    <property type="term" value="P:amino acid activation for nonribosomal peptide biosynthetic process"/>
    <property type="evidence" value="ECO:0007669"/>
    <property type="project" value="TreeGrafter"/>
</dbReference>
<dbReference type="GO" id="GO:0044550">
    <property type="term" value="P:secondary metabolite biosynthetic process"/>
    <property type="evidence" value="ECO:0007669"/>
    <property type="project" value="TreeGrafter"/>
</dbReference>
<dbReference type="CDD" id="cd05918">
    <property type="entry name" value="A_NRPS_SidN3_like"/>
    <property type="match status" value="6"/>
</dbReference>
<dbReference type="CDD" id="cd19542">
    <property type="entry name" value="CT_NRPS-like"/>
    <property type="match status" value="1"/>
</dbReference>
<dbReference type="CDD" id="cd19545">
    <property type="entry name" value="FUM14_C_NRPS-like"/>
    <property type="match status" value="6"/>
</dbReference>
<dbReference type="FunFam" id="3.40.50.980:FF:000001">
    <property type="entry name" value="Non-ribosomal peptide synthetase"/>
    <property type="match status" value="3"/>
</dbReference>
<dbReference type="FunFam" id="3.30.300.30:FF:000015">
    <property type="entry name" value="Nonribosomal peptide synthase SidD"/>
    <property type="match status" value="6"/>
</dbReference>
<dbReference type="FunFam" id="3.30.559.30:FF:000003">
    <property type="entry name" value="Nonribosomal peptide synthase SidD"/>
    <property type="match status" value="6"/>
</dbReference>
<dbReference type="FunFam" id="1.10.1200.10:FF:000005">
    <property type="entry name" value="Nonribosomal peptide synthetase 1"/>
    <property type="match status" value="4"/>
</dbReference>
<dbReference type="FunFam" id="3.40.50.12780:FF:000014">
    <property type="entry name" value="Nonribosomal peptide synthetase 1"/>
    <property type="match status" value="4"/>
</dbReference>
<dbReference type="Gene3D" id="3.30.300.30">
    <property type="match status" value="6"/>
</dbReference>
<dbReference type="Gene3D" id="1.10.1200.10">
    <property type="entry name" value="ACP-like"/>
    <property type="match status" value="7"/>
</dbReference>
<dbReference type="Gene3D" id="3.30.559.10">
    <property type="entry name" value="Chloramphenicol acetyltransferase-like domain"/>
    <property type="match status" value="7"/>
</dbReference>
<dbReference type="Gene3D" id="3.40.50.12780">
    <property type="entry name" value="N-terminal domain of ligase-like"/>
    <property type="match status" value="6"/>
</dbReference>
<dbReference type="Gene3D" id="3.30.559.30">
    <property type="entry name" value="Nonribosomal peptide synthetase, condensation domain"/>
    <property type="match status" value="7"/>
</dbReference>
<dbReference type="InterPro" id="IPR010071">
    <property type="entry name" value="AA_adenyl_dom"/>
</dbReference>
<dbReference type="InterPro" id="IPR036736">
    <property type="entry name" value="ACP-like_sf"/>
</dbReference>
<dbReference type="InterPro" id="IPR045851">
    <property type="entry name" value="AMP-bd_C_sf"/>
</dbReference>
<dbReference type="InterPro" id="IPR020845">
    <property type="entry name" value="AMP-binding_CS"/>
</dbReference>
<dbReference type="InterPro" id="IPR000873">
    <property type="entry name" value="AMP-dep_synth/lig_dom"/>
</dbReference>
<dbReference type="InterPro" id="IPR042099">
    <property type="entry name" value="ANL_N_sf"/>
</dbReference>
<dbReference type="InterPro" id="IPR023213">
    <property type="entry name" value="CAT-like_dom_sf"/>
</dbReference>
<dbReference type="InterPro" id="IPR001242">
    <property type="entry name" value="Condensatn"/>
</dbReference>
<dbReference type="InterPro" id="IPR020806">
    <property type="entry name" value="PKS_PP-bd"/>
</dbReference>
<dbReference type="InterPro" id="IPR009081">
    <property type="entry name" value="PP-bd_ACP"/>
</dbReference>
<dbReference type="InterPro" id="IPR006162">
    <property type="entry name" value="Ppantetheine_attach_site"/>
</dbReference>
<dbReference type="NCBIfam" id="TIGR01733">
    <property type="entry name" value="AA-adenyl-dom"/>
    <property type="match status" value="5"/>
</dbReference>
<dbReference type="NCBIfam" id="NF003417">
    <property type="entry name" value="PRK04813.1"/>
    <property type="match status" value="6"/>
</dbReference>
<dbReference type="PANTHER" id="PTHR45527:SF16">
    <property type="entry name" value="NONRIBOSOMAL PEPTIDE SYNTHASE ATNA-RELATED"/>
    <property type="match status" value="1"/>
</dbReference>
<dbReference type="PANTHER" id="PTHR45527">
    <property type="entry name" value="NONRIBOSOMAL PEPTIDE SYNTHETASE"/>
    <property type="match status" value="1"/>
</dbReference>
<dbReference type="Pfam" id="PF00501">
    <property type="entry name" value="AMP-binding"/>
    <property type="match status" value="6"/>
</dbReference>
<dbReference type="Pfam" id="PF00668">
    <property type="entry name" value="Condensation"/>
    <property type="match status" value="7"/>
</dbReference>
<dbReference type="Pfam" id="PF00550">
    <property type="entry name" value="PP-binding"/>
    <property type="match status" value="7"/>
</dbReference>
<dbReference type="SMART" id="SM00823">
    <property type="entry name" value="PKS_PP"/>
    <property type="match status" value="7"/>
</dbReference>
<dbReference type="SMART" id="SM01294">
    <property type="entry name" value="PKS_PP_betabranch"/>
    <property type="match status" value="1"/>
</dbReference>
<dbReference type="SUPFAM" id="SSF56801">
    <property type="entry name" value="Acetyl-CoA synthetase-like"/>
    <property type="match status" value="6"/>
</dbReference>
<dbReference type="SUPFAM" id="SSF47336">
    <property type="entry name" value="ACP-like"/>
    <property type="match status" value="7"/>
</dbReference>
<dbReference type="SUPFAM" id="SSF52777">
    <property type="entry name" value="CoA-dependent acyltransferases"/>
    <property type="match status" value="14"/>
</dbReference>
<dbReference type="PROSITE" id="PS00455">
    <property type="entry name" value="AMP_BINDING"/>
    <property type="match status" value="6"/>
</dbReference>
<dbReference type="PROSITE" id="PS50075">
    <property type="entry name" value="CARRIER"/>
    <property type="match status" value="7"/>
</dbReference>
<dbReference type="PROSITE" id="PS00012">
    <property type="entry name" value="PHOSPHOPANTETHEINE"/>
    <property type="match status" value="1"/>
</dbReference>
<feature type="chain" id="PRO_0000444480" description="Nonribosomal peptide synthetase gloA">
    <location>
        <begin position="1"/>
        <end position="7192"/>
    </location>
</feature>
<feature type="domain" description="Carrier 1" evidence="3 16">
    <location>
        <begin position="105"/>
        <end position="181"/>
    </location>
</feature>
<feature type="domain" description="Carrier 2" evidence="3 16">
    <location>
        <begin position="1190"/>
        <end position="1266"/>
    </location>
</feature>
<feature type="domain" description="Carrier 3" evidence="3 16">
    <location>
        <begin position="2288"/>
        <end position="2364"/>
    </location>
</feature>
<feature type="domain" description="Carrier 4" evidence="3 16">
    <location>
        <begin position="3378"/>
        <end position="3455"/>
    </location>
</feature>
<feature type="domain" description="Carrier 5" evidence="3 16">
    <location>
        <begin position="4453"/>
        <end position="4529"/>
    </location>
</feature>
<feature type="domain" description="Carrier 6" evidence="3 16">
    <location>
        <begin position="5551"/>
        <end position="5627"/>
    </location>
</feature>
<feature type="domain" description="Carrier 7" evidence="3 16">
    <location>
        <begin position="6645"/>
        <end position="6721"/>
    </location>
</feature>
<feature type="region of interest" description="Disordered" evidence="4">
    <location>
        <begin position="1"/>
        <end position="52"/>
    </location>
</feature>
<feature type="region of interest" description="Condensation 1" evidence="2 16">
    <location>
        <begin position="239"/>
        <end position="634"/>
    </location>
</feature>
<feature type="region of interest" description="Adenylation 1" evidence="2 16">
    <location>
        <begin position="675"/>
        <end position="1047"/>
    </location>
</feature>
<feature type="region of interest" description="Condensation 2" evidence="2 16">
    <location>
        <begin position="1316"/>
        <end position="1736"/>
    </location>
</feature>
<feature type="region of interest" description="Adenylation 2" evidence="2 16">
    <location>
        <begin position="1758"/>
        <end position="2154"/>
    </location>
</feature>
<feature type="region of interest" description="Condensation 3" evidence="2 16">
    <location>
        <begin position="2407"/>
        <end position="2829"/>
    </location>
</feature>
<feature type="region of interest" description="Adenylation 3" evidence="2 16">
    <location>
        <begin position="2849"/>
        <end position="3245"/>
    </location>
</feature>
<feature type="region of interest" description="Condensation 4" evidence="2 16">
    <location>
        <begin position="3502"/>
        <end position="3891"/>
    </location>
</feature>
<feature type="region of interest" description="Adenylation 4" evidence="2 16">
    <location>
        <begin position="3920"/>
        <end position="4320"/>
    </location>
</feature>
<feature type="region of interest" description="Condensation 5" evidence="2 16">
    <location>
        <begin position="4574"/>
        <end position="4971"/>
    </location>
</feature>
<feature type="region of interest" description="Adenylation 5" evidence="2 16">
    <location>
        <begin position="5013"/>
        <end position="5414"/>
    </location>
</feature>
<feature type="region of interest" description="Condensation 6" evidence="2 16">
    <location>
        <begin position="5674"/>
        <end position="6071"/>
    </location>
</feature>
<feature type="region of interest" description="Adenylation 6" evidence="2 16">
    <location>
        <begin position="6111"/>
        <end position="6507"/>
    </location>
</feature>
<feature type="region of interest" description="Condensation 7" evidence="2 16">
    <location>
        <begin position="6795"/>
        <end position="7178"/>
    </location>
</feature>
<feature type="compositionally biased region" description="Polar residues" evidence="4">
    <location>
        <begin position="1"/>
        <end position="48"/>
    </location>
</feature>
<feature type="modified residue" description="O-(pantetheine 4'-phosphoryl)serine" evidence="3">
    <location>
        <position position="142"/>
    </location>
</feature>
<feature type="modified residue" description="O-(pantetheine 4'-phosphoryl)serine" evidence="3">
    <location>
        <position position="1227"/>
    </location>
</feature>
<feature type="modified residue" description="O-(pantetheine 4'-phosphoryl)serine" evidence="3">
    <location>
        <position position="2325"/>
    </location>
</feature>
<feature type="modified residue" description="O-(pantetheine 4'-phosphoryl)serine" evidence="3">
    <location>
        <position position="3415"/>
    </location>
</feature>
<feature type="modified residue" description="O-(pantetheine 4'-phosphoryl)serine" evidence="3">
    <location>
        <position position="4490"/>
    </location>
</feature>
<feature type="modified residue" description="O-(pantetheine 4'-phosphoryl)serine" evidence="3">
    <location>
        <position position="5588"/>
    </location>
</feature>
<feature type="modified residue" description="O-(pantetheine 4'-phosphoryl)serine" evidence="3">
    <location>
        <position position="6682"/>
    </location>
</feature>
<gene>
    <name evidence="12" type="primary">gloA</name>
    <name evidence="11" type="synonym">GLNRPS4</name>
    <name type="ORF">GLAREA_10035</name>
</gene>